<keyword id="KW-0010">Activator</keyword>
<keyword id="KW-0112">Calmodulin-binding</keyword>
<keyword id="KW-0963">Cytoplasm</keyword>
<keyword id="KW-0221">Differentiation</keyword>
<keyword id="KW-0238">DNA-binding</keyword>
<keyword id="KW-0539">Nucleus</keyword>
<keyword id="KW-1185">Reference proteome</keyword>
<keyword id="KW-0678">Repressor</keyword>
<keyword id="KW-0726">Sexual differentiation</keyword>
<keyword id="KW-0804">Transcription</keyword>
<keyword id="KW-0805">Transcription regulation</keyword>
<evidence type="ECO:0000250" key="1">
    <source>
        <dbReference type="UniProtKB" id="P36394"/>
    </source>
</evidence>
<evidence type="ECO:0000250" key="2">
    <source>
        <dbReference type="UniProtKB" id="Q05066"/>
    </source>
</evidence>
<evidence type="ECO:0000255" key="3">
    <source>
        <dbReference type="PROSITE-ProRule" id="PRU00267"/>
    </source>
</evidence>
<evidence type="ECO:0000256" key="4">
    <source>
        <dbReference type="SAM" id="MobiDB-lite"/>
    </source>
</evidence>
<evidence type="ECO:0000305" key="5"/>
<dbReference type="EMBL" id="AB108521">
    <property type="protein sequence ID" value="BAC75653.1"/>
    <property type="molecule type" value="Genomic_DNA"/>
</dbReference>
<dbReference type="SMR" id="Q864Q0"/>
<dbReference type="FunCoup" id="Q864Q0">
    <property type="interactions" value="12"/>
</dbReference>
<dbReference type="InParanoid" id="Q864Q0"/>
<dbReference type="OrthoDB" id="6247875at2759"/>
<dbReference type="Proteomes" id="UP000245320">
    <property type="component" value="Unplaced"/>
</dbReference>
<dbReference type="GO" id="GO:0005737">
    <property type="term" value="C:cytoplasm"/>
    <property type="evidence" value="ECO:0007669"/>
    <property type="project" value="UniProtKB-SubCell"/>
</dbReference>
<dbReference type="GO" id="GO:0016607">
    <property type="term" value="C:nuclear speck"/>
    <property type="evidence" value="ECO:0007669"/>
    <property type="project" value="UniProtKB-SubCell"/>
</dbReference>
<dbReference type="GO" id="GO:0005634">
    <property type="term" value="C:nucleus"/>
    <property type="evidence" value="ECO:0000250"/>
    <property type="project" value="UniProtKB"/>
</dbReference>
<dbReference type="GO" id="GO:0005516">
    <property type="term" value="F:calmodulin binding"/>
    <property type="evidence" value="ECO:0007669"/>
    <property type="project" value="UniProtKB-KW"/>
</dbReference>
<dbReference type="GO" id="GO:0001228">
    <property type="term" value="F:DNA-binding transcription activator activity, RNA polymerase II-specific"/>
    <property type="evidence" value="ECO:0007669"/>
    <property type="project" value="TreeGrafter"/>
</dbReference>
<dbReference type="GO" id="GO:0000978">
    <property type="term" value="F:RNA polymerase II cis-regulatory region sequence-specific DNA binding"/>
    <property type="evidence" value="ECO:0007669"/>
    <property type="project" value="TreeGrafter"/>
</dbReference>
<dbReference type="GO" id="GO:0030154">
    <property type="term" value="P:cell differentiation"/>
    <property type="evidence" value="ECO:0007669"/>
    <property type="project" value="UniProtKB-KW"/>
</dbReference>
<dbReference type="GO" id="GO:0030238">
    <property type="term" value="P:male sex determination"/>
    <property type="evidence" value="ECO:0007669"/>
    <property type="project" value="InterPro"/>
</dbReference>
<dbReference type="GO" id="GO:0007548">
    <property type="term" value="P:sex differentiation"/>
    <property type="evidence" value="ECO:0007669"/>
    <property type="project" value="UniProtKB-KW"/>
</dbReference>
<dbReference type="CDD" id="cd22034">
    <property type="entry name" value="HMG-box_SoxA_SRY"/>
    <property type="match status" value="1"/>
</dbReference>
<dbReference type="FunFam" id="1.10.30.10:FF:000002">
    <property type="entry name" value="transcription factor Sox-2"/>
    <property type="match status" value="1"/>
</dbReference>
<dbReference type="Gene3D" id="1.10.30.10">
    <property type="entry name" value="High mobility group box domain"/>
    <property type="match status" value="1"/>
</dbReference>
<dbReference type="InterPro" id="IPR009071">
    <property type="entry name" value="HMG_box_dom"/>
</dbReference>
<dbReference type="InterPro" id="IPR036910">
    <property type="entry name" value="HMG_box_dom_sf"/>
</dbReference>
<dbReference type="InterPro" id="IPR017253">
    <property type="entry name" value="SRY"/>
</dbReference>
<dbReference type="InterPro" id="IPR050140">
    <property type="entry name" value="SRY-related_HMG-box_TF-like"/>
</dbReference>
<dbReference type="PANTHER" id="PTHR10270:SF161">
    <property type="entry name" value="SEX-DETERMINING REGION Y PROTEIN"/>
    <property type="match status" value="1"/>
</dbReference>
<dbReference type="PANTHER" id="PTHR10270">
    <property type="entry name" value="SOX TRANSCRIPTION FACTOR"/>
    <property type="match status" value="1"/>
</dbReference>
<dbReference type="Pfam" id="PF00505">
    <property type="entry name" value="HMG_box"/>
    <property type="match status" value="1"/>
</dbReference>
<dbReference type="PIRSF" id="PIRSF037653">
    <property type="entry name" value="SRY"/>
    <property type="match status" value="1"/>
</dbReference>
<dbReference type="SMART" id="SM00398">
    <property type="entry name" value="HMG"/>
    <property type="match status" value="1"/>
</dbReference>
<dbReference type="SUPFAM" id="SSF47095">
    <property type="entry name" value="HMG-box"/>
    <property type="match status" value="1"/>
</dbReference>
<dbReference type="PROSITE" id="PS50118">
    <property type="entry name" value="HMG_BOX_2"/>
    <property type="match status" value="1"/>
</dbReference>
<sequence>MFRTVNGEDYSPAVQQRNILDFGKAHSLLWTDNGSANDRCETGGNCRESGQDRVKRPMNAFIVWSRDQRRKVALENPQMQNSEISKRLGYDWKMLTEAEKQPFFEEAQRLRAMHRDKYPGYKYRPRRKAKEATEIASRRLFSTVQPNAHRGDVVPLPIQGRLRQGHTFTNGKPVKPLTAHEHKQLTPATGASQQLDKPAPQ</sequence>
<organism>
    <name type="scientific">Tursiops truncatus</name>
    <name type="common">Atlantic bottle-nosed dolphin</name>
    <name type="synonym">Delphinus truncatus</name>
    <dbReference type="NCBI Taxonomy" id="9739"/>
    <lineage>
        <taxon>Eukaryota</taxon>
        <taxon>Metazoa</taxon>
        <taxon>Chordata</taxon>
        <taxon>Craniata</taxon>
        <taxon>Vertebrata</taxon>
        <taxon>Euteleostomi</taxon>
        <taxon>Mammalia</taxon>
        <taxon>Eutheria</taxon>
        <taxon>Laurasiatheria</taxon>
        <taxon>Artiodactyla</taxon>
        <taxon>Whippomorpha</taxon>
        <taxon>Cetacea</taxon>
        <taxon>Odontoceti</taxon>
        <taxon>Delphinidae</taxon>
        <taxon>Tursiops</taxon>
    </lineage>
</organism>
<comment type="function">
    <text evidence="1 2">Transcriptional regulator that controls a genetic switch in male development. It is necessary and sufficient for initiating male sex determination by directing the development of supporting cell precursors (pre-Sertoli cells) as Sertoli rather than granulosa cells. Involved in different aspects of gene regulation including promoter activation or repression. Binds to the DNA consensus sequence 5'-[AT]AACAA[AT]-3'. SRY HMG box recognizes DNA by partial intercalation in the minor groove and promotes DNA bending. Also involved in pre-mRNA splicing (By similarity). In male adult brain involved in the maintenance of motor functions of dopaminergic neurons (By similarity).</text>
</comment>
<comment type="subunit">
    <text evidence="2">Interacts with CALM, EP300, HDAC3, KPNB1, ZNF208 isoform KRAB-O, PARP1, SLC9A3R2 and WT1. The interaction with EP300 modulates its DNA-binding activity. The interaction with KPNB1 is sensitive to dissociation by Ran in the GTP-bound form. Interaction with PARP1 impaired its DNA-binding activity.</text>
</comment>
<comment type="subcellular location">
    <subcellularLocation>
        <location evidence="2">Nucleus speckle</location>
    </subcellularLocation>
    <subcellularLocation>
        <location evidence="2">Cytoplasm</location>
    </subcellularLocation>
    <subcellularLocation>
        <location evidence="2">Nucleus</location>
    </subcellularLocation>
</comment>
<comment type="similarity">
    <text evidence="5">Belongs to the SRY family.</text>
</comment>
<comment type="online information" name="Protein Spotlight">
    <link uri="https://www.proteinspotlight.org/back_issues/080"/>
    <text>The tenuous nature of sex - Issue 80 of March 2007</text>
</comment>
<name>SRY_TURTR</name>
<protein>
    <recommendedName>
        <fullName>Sex-determining region Y protein</fullName>
    </recommendedName>
    <alternativeName>
        <fullName>Testis-determining factor</fullName>
    </alternativeName>
</protein>
<proteinExistence type="inferred from homology"/>
<accession>Q864Q0</accession>
<reference key="1">
    <citation type="journal article" date="2003" name="Mammal Study">
        <title>SRY gene structure and phylogeny in the cetacean species.</title>
        <authorList>
            <person name="Nishida S."/>
            <person name="Pastene L.A."/>
            <person name="Goto M."/>
            <person name="Koike H."/>
        </authorList>
    </citation>
    <scope>NUCLEOTIDE SEQUENCE [GENOMIC DNA]</scope>
</reference>
<gene>
    <name type="primary">SRY</name>
    <name type="synonym">TDF</name>
</gene>
<feature type="chain" id="PRO_0000048709" description="Sex-determining region Y protein">
    <location>
        <begin position="1"/>
        <end position="201"/>
    </location>
</feature>
<feature type="DNA-binding region" description="HMG box" evidence="3">
    <location>
        <begin position="54"/>
        <end position="122"/>
    </location>
</feature>
<feature type="region of interest" description="Disordered" evidence="4">
    <location>
        <begin position="162"/>
        <end position="201"/>
    </location>
</feature>
<feature type="compositionally biased region" description="Polar residues" evidence="4">
    <location>
        <begin position="186"/>
        <end position="195"/>
    </location>
</feature>